<organism>
    <name type="scientific">Variovorax paradoxus (strain S110)</name>
    <dbReference type="NCBI Taxonomy" id="543728"/>
    <lineage>
        <taxon>Bacteria</taxon>
        <taxon>Pseudomonadati</taxon>
        <taxon>Pseudomonadota</taxon>
        <taxon>Betaproteobacteria</taxon>
        <taxon>Burkholderiales</taxon>
        <taxon>Comamonadaceae</taxon>
        <taxon>Variovorax</taxon>
    </lineage>
</organism>
<gene>
    <name evidence="1" type="primary">der</name>
    <name type="synonym">engA</name>
    <name type="ordered locus">Vapar_2191</name>
</gene>
<proteinExistence type="inferred from homology"/>
<name>DER_VARPS</name>
<accession>C5CXH0</accession>
<feature type="chain" id="PRO_1000204050" description="GTPase Der">
    <location>
        <begin position="1"/>
        <end position="447"/>
    </location>
</feature>
<feature type="domain" description="EngA-type G 1">
    <location>
        <begin position="3"/>
        <end position="167"/>
    </location>
</feature>
<feature type="domain" description="EngA-type G 2">
    <location>
        <begin position="181"/>
        <end position="354"/>
    </location>
</feature>
<feature type="domain" description="KH-like" evidence="1">
    <location>
        <begin position="355"/>
        <end position="439"/>
    </location>
</feature>
<feature type="binding site" evidence="1">
    <location>
        <begin position="9"/>
        <end position="16"/>
    </location>
    <ligand>
        <name>GTP</name>
        <dbReference type="ChEBI" id="CHEBI:37565"/>
        <label>1</label>
    </ligand>
</feature>
<feature type="binding site" evidence="1">
    <location>
        <begin position="56"/>
        <end position="60"/>
    </location>
    <ligand>
        <name>GTP</name>
        <dbReference type="ChEBI" id="CHEBI:37565"/>
        <label>1</label>
    </ligand>
</feature>
<feature type="binding site" evidence="1">
    <location>
        <begin position="119"/>
        <end position="122"/>
    </location>
    <ligand>
        <name>GTP</name>
        <dbReference type="ChEBI" id="CHEBI:37565"/>
        <label>1</label>
    </ligand>
</feature>
<feature type="binding site" evidence="1">
    <location>
        <begin position="187"/>
        <end position="194"/>
    </location>
    <ligand>
        <name>GTP</name>
        <dbReference type="ChEBI" id="CHEBI:37565"/>
        <label>2</label>
    </ligand>
</feature>
<feature type="binding site" evidence="1">
    <location>
        <begin position="234"/>
        <end position="238"/>
    </location>
    <ligand>
        <name>GTP</name>
        <dbReference type="ChEBI" id="CHEBI:37565"/>
        <label>2</label>
    </ligand>
</feature>
<feature type="binding site" evidence="1">
    <location>
        <begin position="299"/>
        <end position="302"/>
    </location>
    <ligand>
        <name>GTP</name>
        <dbReference type="ChEBI" id="CHEBI:37565"/>
        <label>2</label>
    </ligand>
</feature>
<evidence type="ECO:0000255" key="1">
    <source>
        <dbReference type="HAMAP-Rule" id="MF_00195"/>
    </source>
</evidence>
<protein>
    <recommendedName>
        <fullName evidence="1">GTPase Der</fullName>
    </recommendedName>
    <alternativeName>
        <fullName evidence="1">GTP-binding protein EngA</fullName>
    </alternativeName>
</protein>
<dbReference type="EMBL" id="CP001635">
    <property type="protein sequence ID" value="ACS18826.1"/>
    <property type="molecule type" value="Genomic_DNA"/>
</dbReference>
<dbReference type="SMR" id="C5CXH0"/>
<dbReference type="STRING" id="543728.Vapar_2191"/>
<dbReference type="KEGG" id="vap:Vapar_2191"/>
<dbReference type="eggNOG" id="COG1160">
    <property type="taxonomic scope" value="Bacteria"/>
</dbReference>
<dbReference type="HOGENOM" id="CLU_016077_6_2_4"/>
<dbReference type="OrthoDB" id="9805918at2"/>
<dbReference type="GO" id="GO:0005525">
    <property type="term" value="F:GTP binding"/>
    <property type="evidence" value="ECO:0007669"/>
    <property type="project" value="UniProtKB-UniRule"/>
</dbReference>
<dbReference type="GO" id="GO:0043022">
    <property type="term" value="F:ribosome binding"/>
    <property type="evidence" value="ECO:0007669"/>
    <property type="project" value="TreeGrafter"/>
</dbReference>
<dbReference type="GO" id="GO:0042254">
    <property type="term" value="P:ribosome biogenesis"/>
    <property type="evidence" value="ECO:0007669"/>
    <property type="project" value="UniProtKB-KW"/>
</dbReference>
<dbReference type="CDD" id="cd01894">
    <property type="entry name" value="EngA1"/>
    <property type="match status" value="1"/>
</dbReference>
<dbReference type="CDD" id="cd01895">
    <property type="entry name" value="EngA2"/>
    <property type="match status" value="1"/>
</dbReference>
<dbReference type="FunFam" id="3.30.300.20:FF:000004">
    <property type="entry name" value="GTPase Der"/>
    <property type="match status" value="1"/>
</dbReference>
<dbReference type="FunFam" id="3.40.50.300:FF:000040">
    <property type="entry name" value="GTPase Der"/>
    <property type="match status" value="1"/>
</dbReference>
<dbReference type="FunFam" id="3.40.50.300:FF:000057">
    <property type="entry name" value="GTPase Der"/>
    <property type="match status" value="1"/>
</dbReference>
<dbReference type="Gene3D" id="3.30.300.20">
    <property type="match status" value="1"/>
</dbReference>
<dbReference type="Gene3D" id="3.40.50.300">
    <property type="entry name" value="P-loop containing nucleotide triphosphate hydrolases"/>
    <property type="match status" value="2"/>
</dbReference>
<dbReference type="HAMAP" id="MF_00195">
    <property type="entry name" value="GTPase_Der"/>
    <property type="match status" value="1"/>
</dbReference>
<dbReference type="InterPro" id="IPR031166">
    <property type="entry name" value="G_ENGA"/>
</dbReference>
<dbReference type="InterPro" id="IPR006073">
    <property type="entry name" value="GTP-bd"/>
</dbReference>
<dbReference type="InterPro" id="IPR016484">
    <property type="entry name" value="GTPase_Der"/>
</dbReference>
<dbReference type="InterPro" id="IPR032859">
    <property type="entry name" value="KH_dom-like"/>
</dbReference>
<dbReference type="InterPro" id="IPR015946">
    <property type="entry name" value="KH_dom-like_a/b"/>
</dbReference>
<dbReference type="InterPro" id="IPR027417">
    <property type="entry name" value="P-loop_NTPase"/>
</dbReference>
<dbReference type="InterPro" id="IPR005225">
    <property type="entry name" value="Small_GTP-bd"/>
</dbReference>
<dbReference type="NCBIfam" id="TIGR03594">
    <property type="entry name" value="GTPase_EngA"/>
    <property type="match status" value="1"/>
</dbReference>
<dbReference type="NCBIfam" id="TIGR00231">
    <property type="entry name" value="small_GTP"/>
    <property type="match status" value="2"/>
</dbReference>
<dbReference type="PANTHER" id="PTHR43834">
    <property type="entry name" value="GTPASE DER"/>
    <property type="match status" value="1"/>
</dbReference>
<dbReference type="PANTHER" id="PTHR43834:SF6">
    <property type="entry name" value="GTPASE DER"/>
    <property type="match status" value="1"/>
</dbReference>
<dbReference type="Pfam" id="PF14714">
    <property type="entry name" value="KH_dom-like"/>
    <property type="match status" value="1"/>
</dbReference>
<dbReference type="Pfam" id="PF01926">
    <property type="entry name" value="MMR_HSR1"/>
    <property type="match status" value="2"/>
</dbReference>
<dbReference type="PIRSF" id="PIRSF006485">
    <property type="entry name" value="GTP-binding_EngA"/>
    <property type="match status" value="1"/>
</dbReference>
<dbReference type="PRINTS" id="PR00326">
    <property type="entry name" value="GTP1OBG"/>
</dbReference>
<dbReference type="SUPFAM" id="SSF52540">
    <property type="entry name" value="P-loop containing nucleoside triphosphate hydrolases"/>
    <property type="match status" value="2"/>
</dbReference>
<dbReference type="PROSITE" id="PS51712">
    <property type="entry name" value="G_ENGA"/>
    <property type="match status" value="2"/>
</dbReference>
<keyword id="KW-0342">GTP-binding</keyword>
<keyword id="KW-0547">Nucleotide-binding</keyword>
<keyword id="KW-0677">Repeat</keyword>
<keyword id="KW-0690">Ribosome biogenesis</keyword>
<comment type="function">
    <text evidence="1">GTPase that plays an essential role in the late steps of ribosome biogenesis.</text>
</comment>
<comment type="subunit">
    <text evidence="1">Associates with the 50S ribosomal subunit.</text>
</comment>
<comment type="similarity">
    <text evidence="1">Belongs to the TRAFAC class TrmE-Era-EngA-EngB-Septin-like GTPase superfamily. EngA (Der) GTPase family.</text>
</comment>
<sequence>MKPVVALVGRPNVGKSTLFNRLTQTRDAIVADFAGLTRDRHYGNGRLGKHEFIVIDTGGFEPDAGSGIYKEMAKQTRQAVAEADVVIFVVDAREGLSAQDHDIANELRRLGKPCVLAANKAEGMHDGTKLVDFYELGFGDVHGVSAAHGQGMRDLVELALAPLNLPDPDDEADEDDVNKPIKLAVAGRPNVGKSTLINTWLGEERLVAFDLPGTTRDAISVPFERNGQRFELIDTAGLRRKGKVFEAIEKFSVVKTLQAIESASVVLLLLDATQGVTDQDAHIAGYILESGRAVVIAINKWDAVDSYQREQIQRQIETRLPFLKFASLHFISAIKRQGLGPVWQAIAQAHKSATRKMSTPVLTRLLLEAVQFQSPKRAGMFRPKLRYAHQGGMNPPVIIIHGNSLEHVTEAYKRFLEGRFRKEFDLVGTPLRIQFKSSQNPFADKDD</sequence>
<reference key="1">
    <citation type="journal article" date="2011" name="J. Bacteriol.">
        <title>Complete genome sequence of the metabolically versatile plant growth-promoting endophyte, Variovorax paradoxus S110.</title>
        <authorList>
            <person name="Han J.I."/>
            <person name="Choi H.K."/>
            <person name="Lee S.W."/>
            <person name="Orwin P.M."/>
            <person name="Kim J."/>
            <person name="Laroe S.L."/>
            <person name="Kim T.G."/>
            <person name="O'Neil J."/>
            <person name="Leadbetter J.R."/>
            <person name="Lee S.Y."/>
            <person name="Hur C.G."/>
            <person name="Spain J.C."/>
            <person name="Ovchinnikova G."/>
            <person name="Goodwin L."/>
            <person name="Han C."/>
        </authorList>
    </citation>
    <scope>NUCLEOTIDE SEQUENCE [LARGE SCALE GENOMIC DNA]</scope>
    <source>
        <strain>S110</strain>
    </source>
</reference>